<gene>
    <name evidence="1" type="primary">rplO</name>
    <name type="ordered locus">LMOf2365_2586</name>
</gene>
<proteinExistence type="inferred from homology"/>
<sequence length="146" mass="15781">MKLHELKPSEGSRKERNRVGRGTGSGNGKTSGRGHKGQKARSGGGVRLGFEGGQLPLFRRIPKRGFTNINRKEFAIVNLDVLNRFEDGTEVTPELLVETGIIRNEKSGIKILSNGNIEKKLTVKANKFSAAAKEAIEAAGGKTEVI</sequence>
<protein>
    <recommendedName>
        <fullName evidence="1">Large ribosomal subunit protein uL15</fullName>
    </recommendedName>
    <alternativeName>
        <fullName evidence="3">50S ribosomal protein L15</fullName>
    </alternativeName>
</protein>
<name>RL15_LISMF</name>
<accession>Q71WG5</accession>
<evidence type="ECO:0000255" key="1">
    <source>
        <dbReference type="HAMAP-Rule" id="MF_01341"/>
    </source>
</evidence>
<evidence type="ECO:0000256" key="2">
    <source>
        <dbReference type="SAM" id="MobiDB-lite"/>
    </source>
</evidence>
<evidence type="ECO:0000305" key="3"/>
<organism>
    <name type="scientific">Listeria monocytogenes serotype 4b (strain F2365)</name>
    <dbReference type="NCBI Taxonomy" id="265669"/>
    <lineage>
        <taxon>Bacteria</taxon>
        <taxon>Bacillati</taxon>
        <taxon>Bacillota</taxon>
        <taxon>Bacilli</taxon>
        <taxon>Bacillales</taxon>
        <taxon>Listeriaceae</taxon>
        <taxon>Listeria</taxon>
    </lineage>
</organism>
<feature type="chain" id="PRO_0000104747" description="Large ribosomal subunit protein uL15">
    <location>
        <begin position="1"/>
        <end position="146"/>
    </location>
</feature>
<feature type="region of interest" description="Disordered" evidence="2">
    <location>
        <begin position="1"/>
        <end position="50"/>
    </location>
</feature>
<feature type="compositionally biased region" description="Basic and acidic residues" evidence="2">
    <location>
        <begin position="1"/>
        <end position="18"/>
    </location>
</feature>
<feature type="compositionally biased region" description="Gly residues" evidence="2">
    <location>
        <begin position="21"/>
        <end position="31"/>
    </location>
</feature>
<keyword id="KW-0687">Ribonucleoprotein</keyword>
<keyword id="KW-0689">Ribosomal protein</keyword>
<keyword id="KW-0694">RNA-binding</keyword>
<keyword id="KW-0699">rRNA-binding</keyword>
<reference key="1">
    <citation type="journal article" date="2004" name="Nucleic Acids Res.">
        <title>Whole genome comparisons of serotype 4b and 1/2a strains of the food-borne pathogen Listeria monocytogenes reveal new insights into the core genome components of this species.</title>
        <authorList>
            <person name="Nelson K.E."/>
            <person name="Fouts D.E."/>
            <person name="Mongodin E.F."/>
            <person name="Ravel J."/>
            <person name="DeBoy R.T."/>
            <person name="Kolonay J.F."/>
            <person name="Rasko D.A."/>
            <person name="Angiuoli S.V."/>
            <person name="Gill S.R."/>
            <person name="Paulsen I.T."/>
            <person name="Peterson J.D."/>
            <person name="White O."/>
            <person name="Nelson W.C."/>
            <person name="Nierman W.C."/>
            <person name="Beanan M.J."/>
            <person name="Brinkac L.M."/>
            <person name="Daugherty S.C."/>
            <person name="Dodson R.J."/>
            <person name="Durkin A.S."/>
            <person name="Madupu R."/>
            <person name="Haft D.H."/>
            <person name="Selengut J."/>
            <person name="Van Aken S.E."/>
            <person name="Khouri H.M."/>
            <person name="Fedorova N."/>
            <person name="Forberger H.A."/>
            <person name="Tran B."/>
            <person name="Kathariou S."/>
            <person name="Wonderling L.D."/>
            <person name="Uhlich G.A."/>
            <person name="Bayles D.O."/>
            <person name="Luchansky J.B."/>
            <person name="Fraser C.M."/>
        </authorList>
    </citation>
    <scope>NUCLEOTIDE SEQUENCE [LARGE SCALE GENOMIC DNA]</scope>
    <source>
        <strain>F2365</strain>
    </source>
</reference>
<dbReference type="EMBL" id="AE017262">
    <property type="protein sequence ID" value="AAT05351.1"/>
    <property type="molecule type" value="Genomic_DNA"/>
</dbReference>
<dbReference type="RefSeq" id="WP_003723680.1">
    <property type="nucleotide sequence ID" value="NC_002973.6"/>
</dbReference>
<dbReference type="SMR" id="Q71WG5"/>
<dbReference type="GeneID" id="93240494"/>
<dbReference type="KEGG" id="lmf:LMOf2365_2586"/>
<dbReference type="HOGENOM" id="CLU_055188_4_2_9"/>
<dbReference type="GO" id="GO:0022625">
    <property type="term" value="C:cytosolic large ribosomal subunit"/>
    <property type="evidence" value="ECO:0007669"/>
    <property type="project" value="TreeGrafter"/>
</dbReference>
<dbReference type="GO" id="GO:0019843">
    <property type="term" value="F:rRNA binding"/>
    <property type="evidence" value="ECO:0007669"/>
    <property type="project" value="UniProtKB-UniRule"/>
</dbReference>
<dbReference type="GO" id="GO:0003735">
    <property type="term" value="F:structural constituent of ribosome"/>
    <property type="evidence" value="ECO:0007669"/>
    <property type="project" value="InterPro"/>
</dbReference>
<dbReference type="GO" id="GO:0006412">
    <property type="term" value="P:translation"/>
    <property type="evidence" value="ECO:0007669"/>
    <property type="project" value="UniProtKB-UniRule"/>
</dbReference>
<dbReference type="FunFam" id="3.100.10.10:FF:000004">
    <property type="entry name" value="50S ribosomal protein L15"/>
    <property type="match status" value="1"/>
</dbReference>
<dbReference type="Gene3D" id="3.100.10.10">
    <property type="match status" value="1"/>
</dbReference>
<dbReference type="HAMAP" id="MF_01341">
    <property type="entry name" value="Ribosomal_uL15"/>
    <property type="match status" value="1"/>
</dbReference>
<dbReference type="InterPro" id="IPR030878">
    <property type="entry name" value="Ribosomal_uL15"/>
</dbReference>
<dbReference type="InterPro" id="IPR021131">
    <property type="entry name" value="Ribosomal_uL15/eL18"/>
</dbReference>
<dbReference type="InterPro" id="IPR036227">
    <property type="entry name" value="Ribosomal_uL15/eL18_sf"/>
</dbReference>
<dbReference type="InterPro" id="IPR005749">
    <property type="entry name" value="Ribosomal_uL15_bac-type"/>
</dbReference>
<dbReference type="InterPro" id="IPR001196">
    <property type="entry name" value="Ribosomal_uL15_CS"/>
</dbReference>
<dbReference type="NCBIfam" id="TIGR01071">
    <property type="entry name" value="rplO_bact"/>
    <property type="match status" value="1"/>
</dbReference>
<dbReference type="PANTHER" id="PTHR12934">
    <property type="entry name" value="50S RIBOSOMAL PROTEIN L15"/>
    <property type="match status" value="1"/>
</dbReference>
<dbReference type="PANTHER" id="PTHR12934:SF11">
    <property type="entry name" value="LARGE RIBOSOMAL SUBUNIT PROTEIN UL15M"/>
    <property type="match status" value="1"/>
</dbReference>
<dbReference type="Pfam" id="PF00828">
    <property type="entry name" value="Ribosomal_L27A"/>
    <property type="match status" value="1"/>
</dbReference>
<dbReference type="SUPFAM" id="SSF52080">
    <property type="entry name" value="Ribosomal proteins L15p and L18e"/>
    <property type="match status" value="1"/>
</dbReference>
<dbReference type="PROSITE" id="PS00475">
    <property type="entry name" value="RIBOSOMAL_L15"/>
    <property type="match status" value="1"/>
</dbReference>
<comment type="function">
    <text evidence="1">Binds to the 23S rRNA.</text>
</comment>
<comment type="subunit">
    <text evidence="1">Part of the 50S ribosomal subunit.</text>
</comment>
<comment type="similarity">
    <text evidence="1">Belongs to the universal ribosomal protein uL15 family.</text>
</comment>